<dbReference type="EC" id="4.2.1.33" evidence="1"/>
<dbReference type="EMBL" id="CP000112">
    <property type="protein sequence ID" value="ABB40013.1"/>
    <property type="molecule type" value="Genomic_DNA"/>
</dbReference>
<dbReference type="RefSeq" id="WP_011368964.1">
    <property type="nucleotide sequence ID" value="NC_007519.1"/>
</dbReference>
<dbReference type="SMR" id="Q30WD3"/>
<dbReference type="STRING" id="207559.Dde_3219"/>
<dbReference type="KEGG" id="dde:Dde_3219"/>
<dbReference type="eggNOG" id="COG0065">
    <property type="taxonomic scope" value="Bacteria"/>
</dbReference>
<dbReference type="HOGENOM" id="CLU_006714_3_4_7"/>
<dbReference type="UniPathway" id="UPA00048">
    <property type="reaction ID" value="UER00071"/>
</dbReference>
<dbReference type="Proteomes" id="UP000002710">
    <property type="component" value="Chromosome"/>
</dbReference>
<dbReference type="GO" id="GO:0003861">
    <property type="term" value="F:3-isopropylmalate dehydratase activity"/>
    <property type="evidence" value="ECO:0007669"/>
    <property type="project" value="UniProtKB-UniRule"/>
</dbReference>
<dbReference type="GO" id="GO:0051539">
    <property type="term" value="F:4 iron, 4 sulfur cluster binding"/>
    <property type="evidence" value="ECO:0007669"/>
    <property type="project" value="UniProtKB-KW"/>
</dbReference>
<dbReference type="GO" id="GO:0046872">
    <property type="term" value="F:metal ion binding"/>
    <property type="evidence" value="ECO:0007669"/>
    <property type="project" value="UniProtKB-KW"/>
</dbReference>
<dbReference type="GO" id="GO:0009098">
    <property type="term" value="P:L-leucine biosynthetic process"/>
    <property type="evidence" value="ECO:0007669"/>
    <property type="project" value="UniProtKB-UniRule"/>
</dbReference>
<dbReference type="CDD" id="cd01583">
    <property type="entry name" value="IPMI"/>
    <property type="match status" value="1"/>
</dbReference>
<dbReference type="Gene3D" id="3.30.499.10">
    <property type="entry name" value="Aconitase, domain 3"/>
    <property type="match status" value="2"/>
</dbReference>
<dbReference type="HAMAP" id="MF_01027">
    <property type="entry name" value="LeuC_type2"/>
    <property type="match status" value="1"/>
</dbReference>
<dbReference type="InterPro" id="IPR015931">
    <property type="entry name" value="Acnase/IPM_dHydase_lsu_aba_1/3"/>
</dbReference>
<dbReference type="InterPro" id="IPR001030">
    <property type="entry name" value="Acoase/IPM_deHydtase_lsu_aba"/>
</dbReference>
<dbReference type="InterPro" id="IPR018136">
    <property type="entry name" value="Aconitase_4Fe-4S_BS"/>
</dbReference>
<dbReference type="InterPro" id="IPR036008">
    <property type="entry name" value="Aconitase_4Fe-4S_dom"/>
</dbReference>
<dbReference type="InterPro" id="IPR011826">
    <property type="entry name" value="HAcnase/IPMdehydase_lsu_prok"/>
</dbReference>
<dbReference type="InterPro" id="IPR006251">
    <property type="entry name" value="Homoacnase/IPMdehydase_lsu"/>
</dbReference>
<dbReference type="InterPro" id="IPR050067">
    <property type="entry name" value="IPM_dehydratase_rel_enz"/>
</dbReference>
<dbReference type="InterPro" id="IPR033941">
    <property type="entry name" value="IPMI_cat"/>
</dbReference>
<dbReference type="InterPro" id="IPR011823">
    <property type="entry name" value="IsopropMal_deHydtase_lsu_bac"/>
</dbReference>
<dbReference type="NCBIfam" id="TIGR01343">
    <property type="entry name" value="hacA_fam"/>
    <property type="match status" value="1"/>
</dbReference>
<dbReference type="NCBIfam" id="TIGR02086">
    <property type="entry name" value="IPMI_arch"/>
    <property type="match status" value="1"/>
</dbReference>
<dbReference type="NCBIfam" id="TIGR02083">
    <property type="entry name" value="LEU2"/>
    <property type="match status" value="1"/>
</dbReference>
<dbReference type="NCBIfam" id="NF001614">
    <property type="entry name" value="PRK00402.1"/>
    <property type="match status" value="1"/>
</dbReference>
<dbReference type="PANTHER" id="PTHR43822:SF16">
    <property type="entry name" value="3-ISOPROPYLMALATE DEHYDRATASE LARGE SUBUNIT 2"/>
    <property type="match status" value="1"/>
</dbReference>
<dbReference type="PANTHER" id="PTHR43822">
    <property type="entry name" value="HOMOACONITASE, MITOCHONDRIAL-RELATED"/>
    <property type="match status" value="1"/>
</dbReference>
<dbReference type="Pfam" id="PF00330">
    <property type="entry name" value="Aconitase"/>
    <property type="match status" value="1"/>
</dbReference>
<dbReference type="PRINTS" id="PR00415">
    <property type="entry name" value="ACONITASE"/>
</dbReference>
<dbReference type="SUPFAM" id="SSF53732">
    <property type="entry name" value="Aconitase iron-sulfur domain"/>
    <property type="match status" value="1"/>
</dbReference>
<dbReference type="PROSITE" id="PS00450">
    <property type="entry name" value="ACONITASE_1"/>
    <property type="match status" value="1"/>
</dbReference>
<dbReference type="PROSITE" id="PS01244">
    <property type="entry name" value="ACONITASE_2"/>
    <property type="match status" value="1"/>
</dbReference>
<name>LEUC_OLEA2</name>
<organism>
    <name type="scientific">Oleidesulfovibrio alaskensis (strain ATCC BAA-1058 / DSM 17464 / G20)</name>
    <name type="common">Desulfovibrio alaskensis</name>
    <dbReference type="NCBI Taxonomy" id="207559"/>
    <lineage>
        <taxon>Bacteria</taxon>
        <taxon>Pseudomonadati</taxon>
        <taxon>Thermodesulfobacteriota</taxon>
        <taxon>Desulfovibrionia</taxon>
        <taxon>Desulfovibrionales</taxon>
        <taxon>Desulfovibrionaceae</taxon>
        <taxon>Oleidesulfovibrio</taxon>
    </lineage>
</organism>
<comment type="function">
    <text evidence="1">Catalyzes the isomerization between 2-isopropylmalate and 3-isopropylmalate, via the formation of 2-isopropylmaleate.</text>
</comment>
<comment type="catalytic activity">
    <reaction evidence="1">
        <text>(2R,3S)-3-isopropylmalate = (2S)-2-isopropylmalate</text>
        <dbReference type="Rhea" id="RHEA:32287"/>
        <dbReference type="ChEBI" id="CHEBI:1178"/>
        <dbReference type="ChEBI" id="CHEBI:35121"/>
        <dbReference type="EC" id="4.2.1.33"/>
    </reaction>
</comment>
<comment type="cofactor">
    <cofactor evidence="1">
        <name>[4Fe-4S] cluster</name>
        <dbReference type="ChEBI" id="CHEBI:49883"/>
    </cofactor>
    <text evidence="1">Binds 1 [4Fe-4S] cluster per subunit.</text>
</comment>
<comment type="pathway">
    <text evidence="1">Amino-acid biosynthesis; L-leucine biosynthesis; L-leucine from 3-methyl-2-oxobutanoate: step 2/4.</text>
</comment>
<comment type="subunit">
    <text evidence="1">Heterodimer of LeuC and LeuD.</text>
</comment>
<comment type="similarity">
    <text evidence="1">Belongs to the aconitase/IPM isomerase family. LeuC type 2 subfamily.</text>
</comment>
<keyword id="KW-0004">4Fe-4S</keyword>
<keyword id="KW-0028">Amino-acid biosynthesis</keyword>
<keyword id="KW-0100">Branched-chain amino acid biosynthesis</keyword>
<keyword id="KW-0408">Iron</keyword>
<keyword id="KW-0411">Iron-sulfur</keyword>
<keyword id="KW-0432">Leucine biosynthesis</keyword>
<keyword id="KW-0456">Lyase</keyword>
<keyword id="KW-0479">Metal-binding</keyword>
<keyword id="KW-1185">Reference proteome</keyword>
<evidence type="ECO:0000255" key="1">
    <source>
        <dbReference type="HAMAP-Rule" id="MF_01027"/>
    </source>
</evidence>
<feature type="chain" id="PRO_1000063645" description="3-isopropylmalate dehydratase large subunit">
    <location>
        <begin position="1"/>
        <end position="418"/>
    </location>
</feature>
<feature type="binding site" evidence="1">
    <location>
        <position position="299"/>
    </location>
    <ligand>
        <name>[4Fe-4S] cluster</name>
        <dbReference type="ChEBI" id="CHEBI:49883"/>
    </ligand>
</feature>
<feature type="binding site" evidence="1">
    <location>
        <position position="359"/>
    </location>
    <ligand>
        <name>[4Fe-4S] cluster</name>
        <dbReference type="ChEBI" id="CHEBI:49883"/>
    </ligand>
</feature>
<feature type="binding site" evidence="1">
    <location>
        <position position="362"/>
    </location>
    <ligand>
        <name>[4Fe-4S] cluster</name>
        <dbReference type="ChEBI" id="CHEBI:49883"/>
    </ligand>
</feature>
<protein>
    <recommendedName>
        <fullName evidence="1">3-isopropylmalate dehydratase large subunit</fullName>
        <ecNumber evidence="1">4.2.1.33</ecNumber>
    </recommendedName>
    <alternativeName>
        <fullName evidence="1">Alpha-IPM isomerase</fullName>
        <shortName evidence="1">IPMI</shortName>
    </alternativeName>
    <alternativeName>
        <fullName evidence="1">Isopropylmalate isomerase</fullName>
    </alternativeName>
</protein>
<sequence length="418" mass="44026">MAHTLAQKILQKHTDQQVGEAGQIVRCRVSMALANDITAPLAIKSFRAMGAGKVFDKDRVALVMDHFTPQKDIDSAIQVKNTREFAAQMGITHYYEGGEAGVEHALLPELGLVGPGDIVVGADSHTCTYGGLGAFATGLGSTDVAGAMALGETWFKVPPSIRVSYRGTMPAHVGAKDLVLQLIGHIGVDGALYKALEFDGPVVDAMSVEGRMTIANMAIEAGGKCGLFPSDDLTLAYTAARGRNDEKLSADQDAVYERSLSFDVSDLAPQIACPHLPENVRPVTEVQGVQIHQAVIGSCTNGRISDLREAAAVLRGRKVHKSVRCIVLPATPGIWKQALREGLIETFMDAGCIVGPATCGPCLGGHMGILADGERAIATTNRNFRGRMGSLESEVYLSNPSVAAASAVAGEIADPRGL</sequence>
<accession>Q30WD3</accession>
<reference key="1">
    <citation type="journal article" date="2011" name="J. Bacteriol.">
        <title>Complete genome sequence and updated annotation of Desulfovibrio alaskensis G20.</title>
        <authorList>
            <person name="Hauser L.J."/>
            <person name="Land M.L."/>
            <person name="Brown S.D."/>
            <person name="Larimer F."/>
            <person name="Keller K.L."/>
            <person name="Rapp-Giles B.J."/>
            <person name="Price M.N."/>
            <person name="Lin M."/>
            <person name="Bruce D.C."/>
            <person name="Detter J.C."/>
            <person name="Tapia R."/>
            <person name="Han C.S."/>
            <person name="Goodwin L.A."/>
            <person name="Cheng J.F."/>
            <person name="Pitluck S."/>
            <person name="Copeland A."/>
            <person name="Lucas S."/>
            <person name="Nolan M."/>
            <person name="Lapidus A.L."/>
            <person name="Palumbo A.V."/>
            <person name="Wall J.D."/>
        </authorList>
    </citation>
    <scope>NUCLEOTIDE SEQUENCE [LARGE SCALE GENOMIC DNA]</scope>
    <source>
        <strain>ATCC BAA-1058 / DSM 17464 / G20</strain>
    </source>
</reference>
<gene>
    <name evidence="1" type="primary">leuC</name>
    <name type="ordered locus">Dde_3219</name>
</gene>
<proteinExistence type="inferred from homology"/>